<sequence length="218" mass="23844">MTAVIGVRELGLLDYLPAWQAMQRFTGQRGAQTPDELWLLEHPPVFTQGQAGKAEHLLFPGDIPVVQVDRGGQVTYHGPGQLVGYLLLDVRRSGMGVRELVSRIERSLIELLAGYDVEAHARPDAPGVYVGEMKIASLGLRIRNGRSFHGLALNVDMDLAPFQRINPCGYAGMLMTQLKDQARGPVEFAEVRSRLRAQLAAQLGYAEAKTLTGGIESI</sequence>
<dbReference type="EC" id="2.3.1.181" evidence="1"/>
<dbReference type="EMBL" id="CP001157">
    <property type="protein sequence ID" value="ACO77090.1"/>
    <property type="molecule type" value="Genomic_DNA"/>
</dbReference>
<dbReference type="RefSeq" id="WP_012699515.1">
    <property type="nucleotide sequence ID" value="NC_012560.1"/>
</dbReference>
<dbReference type="SMR" id="C1DMR0"/>
<dbReference type="STRING" id="322710.Avin_08450"/>
<dbReference type="EnsemblBacteria" id="ACO77090">
    <property type="protein sequence ID" value="ACO77090"/>
    <property type="gene ID" value="Avin_08450"/>
</dbReference>
<dbReference type="GeneID" id="88184228"/>
<dbReference type="KEGG" id="avn:Avin_08450"/>
<dbReference type="eggNOG" id="COG0321">
    <property type="taxonomic scope" value="Bacteria"/>
</dbReference>
<dbReference type="HOGENOM" id="CLU_035168_3_1_6"/>
<dbReference type="OrthoDB" id="9787061at2"/>
<dbReference type="UniPathway" id="UPA00538">
    <property type="reaction ID" value="UER00592"/>
</dbReference>
<dbReference type="Proteomes" id="UP000002424">
    <property type="component" value="Chromosome"/>
</dbReference>
<dbReference type="GO" id="GO:0005737">
    <property type="term" value="C:cytoplasm"/>
    <property type="evidence" value="ECO:0007669"/>
    <property type="project" value="UniProtKB-SubCell"/>
</dbReference>
<dbReference type="GO" id="GO:0033819">
    <property type="term" value="F:lipoyl(octanoyl) transferase activity"/>
    <property type="evidence" value="ECO:0007669"/>
    <property type="project" value="UniProtKB-EC"/>
</dbReference>
<dbReference type="GO" id="GO:0036211">
    <property type="term" value="P:protein modification process"/>
    <property type="evidence" value="ECO:0007669"/>
    <property type="project" value="InterPro"/>
</dbReference>
<dbReference type="CDD" id="cd16444">
    <property type="entry name" value="LipB"/>
    <property type="match status" value="1"/>
</dbReference>
<dbReference type="FunFam" id="3.30.930.10:FF:000020">
    <property type="entry name" value="Octanoyltransferase"/>
    <property type="match status" value="1"/>
</dbReference>
<dbReference type="Gene3D" id="3.30.930.10">
    <property type="entry name" value="Bira Bifunctional Protein, Domain 2"/>
    <property type="match status" value="1"/>
</dbReference>
<dbReference type="HAMAP" id="MF_00013">
    <property type="entry name" value="LipB"/>
    <property type="match status" value="1"/>
</dbReference>
<dbReference type="InterPro" id="IPR045864">
    <property type="entry name" value="aa-tRNA-synth_II/BPL/LPL"/>
</dbReference>
<dbReference type="InterPro" id="IPR004143">
    <property type="entry name" value="BPL_LPL_catalytic"/>
</dbReference>
<dbReference type="InterPro" id="IPR000544">
    <property type="entry name" value="Octanoyltransferase"/>
</dbReference>
<dbReference type="InterPro" id="IPR020605">
    <property type="entry name" value="Octanoyltransferase_CS"/>
</dbReference>
<dbReference type="NCBIfam" id="TIGR00214">
    <property type="entry name" value="lipB"/>
    <property type="match status" value="1"/>
</dbReference>
<dbReference type="NCBIfam" id="NF010922">
    <property type="entry name" value="PRK14342.1"/>
    <property type="match status" value="1"/>
</dbReference>
<dbReference type="PANTHER" id="PTHR10993:SF7">
    <property type="entry name" value="LIPOYLTRANSFERASE 2, MITOCHONDRIAL-RELATED"/>
    <property type="match status" value="1"/>
</dbReference>
<dbReference type="PANTHER" id="PTHR10993">
    <property type="entry name" value="OCTANOYLTRANSFERASE"/>
    <property type="match status" value="1"/>
</dbReference>
<dbReference type="Pfam" id="PF21948">
    <property type="entry name" value="LplA-B_cat"/>
    <property type="match status" value="1"/>
</dbReference>
<dbReference type="PIRSF" id="PIRSF016262">
    <property type="entry name" value="LPLase"/>
    <property type="match status" value="1"/>
</dbReference>
<dbReference type="SUPFAM" id="SSF55681">
    <property type="entry name" value="Class II aaRS and biotin synthetases"/>
    <property type="match status" value="1"/>
</dbReference>
<dbReference type="PROSITE" id="PS51733">
    <property type="entry name" value="BPL_LPL_CATALYTIC"/>
    <property type="match status" value="1"/>
</dbReference>
<dbReference type="PROSITE" id="PS01313">
    <property type="entry name" value="LIPB"/>
    <property type="match status" value="1"/>
</dbReference>
<evidence type="ECO:0000255" key="1">
    <source>
        <dbReference type="HAMAP-Rule" id="MF_00013"/>
    </source>
</evidence>
<evidence type="ECO:0000255" key="2">
    <source>
        <dbReference type="PROSITE-ProRule" id="PRU01067"/>
    </source>
</evidence>
<proteinExistence type="inferred from homology"/>
<reference key="1">
    <citation type="journal article" date="2009" name="J. Bacteriol.">
        <title>Genome sequence of Azotobacter vinelandii, an obligate aerobe specialized to support diverse anaerobic metabolic processes.</title>
        <authorList>
            <person name="Setubal J.C."/>
            <person name="Dos Santos P."/>
            <person name="Goldman B.S."/>
            <person name="Ertesvaag H."/>
            <person name="Espin G."/>
            <person name="Rubio L.M."/>
            <person name="Valla S."/>
            <person name="Almeida N.F."/>
            <person name="Balasubramanian D."/>
            <person name="Cromes L."/>
            <person name="Curatti L."/>
            <person name="Du Z."/>
            <person name="Godsy E."/>
            <person name="Goodner B."/>
            <person name="Hellner-Burris K."/>
            <person name="Hernandez J.A."/>
            <person name="Houmiel K."/>
            <person name="Imperial J."/>
            <person name="Kennedy C."/>
            <person name="Larson T.J."/>
            <person name="Latreille P."/>
            <person name="Ligon L.S."/>
            <person name="Lu J."/>
            <person name="Maerk M."/>
            <person name="Miller N.M."/>
            <person name="Norton S."/>
            <person name="O'Carroll I.P."/>
            <person name="Paulsen I."/>
            <person name="Raulfs E.C."/>
            <person name="Roemer R."/>
            <person name="Rosser J."/>
            <person name="Segura D."/>
            <person name="Slater S."/>
            <person name="Stricklin S.L."/>
            <person name="Studholme D.J."/>
            <person name="Sun J."/>
            <person name="Viana C.J."/>
            <person name="Wallin E."/>
            <person name="Wang B."/>
            <person name="Wheeler C."/>
            <person name="Zhu H."/>
            <person name="Dean D.R."/>
            <person name="Dixon R."/>
            <person name="Wood D."/>
        </authorList>
    </citation>
    <scope>NUCLEOTIDE SEQUENCE [LARGE SCALE GENOMIC DNA]</scope>
    <source>
        <strain>DJ / ATCC BAA-1303</strain>
    </source>
</reference>
<comment type="function">
    <text evidence="1">Catalyzes the transfer of endogenously produced octanoic acid from octanoyl-acyl-carrier-protein onto the lipoyl domains of lipoate-dependent enzymes. Lipoyl-ACP can also act as a substrate although octanoyl-ACP is likely to be the physiological substrate.</text>
</comment>
<comment type="catalytic activity">
    <reaction evidence="1">
        <text>octanoyl-[ACP] + L-lysyl-[protein] = N(6)-octanoyl-L-lysyl-[protein] + holo-[ACP] + H(+)</text>
        <dbReference type="Rhea" id="RHEA:17665"/>
        <dbReference type="Rhea" id="RHEA-COMP:9636"/>
        <dbReference type="Rhea" id="RHEA-COMP:9685"/>
        <dbReference type="Rhea" id="RHEA-COMP:9752"/>
        <dbReference type="Rhea" id="RHEA-COMP:9928"/>
        <dbReference type="ChEBI" id="CHEBI:15378"/>
        <dbReference type="ChEBI" id="CHEBI:29969"/>
        <dbReference type="ChEBI" id="CHEBI:64479"/>
        <dbReference type="ChEBI" id="CHEBI:78463"/>
        <dbReference type="ChEBI" id="CHEBI:78809"/>
        <dbReference type="EC" id="2.3.1.181"/>
    </reaction>
</comment>
<comment type="pathway">
    <text evidence="1">Protein modification; protein lipoylation via endogenous pathway; protein N(6)-(lipoyl)lysine from octanoyl-[acyl-carrier-protein]: step 1/2.</text>
</comment>
<comment type="subcellular location">
    <subcellularLocation>
        <location evidence="1">Cytoplasm</location>
    </subcellularLocation>
</comment>
<comment type="miscellaneous">
    <text evidence="1">In the reaction, the free carboxyl group of octanoic acid is attached via an amide linkage to the epsilon-amino group of a specific lysine residue of lipoyl domains of lipoate-dependent enzymes.</text>
</comment>
<comment type="similarity">
    <text evidence="1">Belongs to the LipB family.</text>
</comment>
<gene>
    <name evidence="1" type="primary">lipB</name>
    <name type="ordered locus">Avin_08450</name>
</gene>
<protein>
    <recommendedName>
        <fullName evidence="1">Octanoyltransferase</fullName>
        <ecNumber evidence="1">2.3.1.181</ecNumber>
    </recommendedName>
    <alternativeName>
        <fullName evidence="1">Lipoate-protein ligase B</fullName>
    </alternativeName>
    <alternativeName>
        <fullName evidence="1">Lipoyl/octanoyl transferase</fullName>
    </alternativeName>
    <alternativeName>
        <fullName evidence="1">Octanoyl-[acyl-carrier-protein]-protein N-octanoyltransferase</fullName>
    </alternativeName>
</protein>
<name>LIPB_AZOVD</name>
<keyword id="KW-0012">Acyltransferase</keyword>
<keyword id="KW-0963">Cytoplasm</keyword>
<keyword id="KW-0808">Transferase</keyword>
<feature type="chain" id="PRO_1000201791" description="Octanoyltransferase">
    <location>
        <begin position="1"/>
        <end position="218"/>
    </location>
</feature>
<feature type="domain" description="BPL/LPL catalytic" evidence="2">
    <location>
        <begin position="31"/>
        <end position="207"/>
    </location>
</feature>
<feature type="active site" description="Acyl-thioester intermediate" evidence="1">
    <location>
        <position position="168"/>
    </location>
</feature>
<feature type="binding site" evidence="1">
    <location>
        <begin position="70"/>
        <end position="77"/>
    </location>
    <ligand>
        <name>substrate</name>
    </ligand>
</feature>
<feature type="binding site" evidence="1">
    <location>
        <begin position="137"/>
        <end position="139"/>
    </location>
    <ligand>
        <name>substrate</name>
    </ligand>
</feature>
<feature type="binding site" evidence="1">
    <location>
        <begin position="150"/>
        <end position="152"/>
    </location>
    <ligand>
        <name>substrate</name>
    </ligand>
</feature>
<feature type="site" description="Lowers pKa of active site Cys" evidence="1">
    <location>
        <position position="134"/>
    </location>
</feature>
<organism>
    <name type="scientific">Azotobacter vinelandii (strain DJ / ATCC BAA-1303)</name>
    <dbReference type="NCBI Taxonomy" id="322710"/>
    <lineage>
        <taxon>Bacteria</taxon>
        <taxon>Pseudomonadati</taxon>
        <taxon>Pseudomonadota</taxon>
        <taxon>Gammaproteobacteria</taxon>
        <taxon>Pseudomonadales</taxon>
        <taxon>Pseudomonadaceae</taxon>
        <taxon>Azotobacter</taxon>
    </lineage>
</organism>
<accession>C1DMR0</accession>